<organism>
    <name type="scientific">Bartonella henselae (strain ATCC 49882 / DSM 28221 / CCUG 30454 / Houston 1)</name>
    <name type="common">Rochalimaea henselae</name>
    <dbReference type="NCBI Taxonomy" id="283166"/>
    <lineage>
        <taxon>Bacteria</taxon>
        <taxon>Pseudomonadati</taxon>
        <taxon>Pseudomonadota</taxon>
        <taxon>Alphaproteobacteria</taxon>
        <taxon>Hyphomicrobiales</taxon>
        <taxon>Bartonellaceae</taxon>
        <taxon>Bartonella</taxon>
    </lineage>
</organism>
<gene>
    <name evidence="1" type="primary">rpsK</name>
    <name type="ordered locus">BH10280</name>
</gene>
<feature type="chain" id="PRO_0000123108" description="Small ribosomal subunit protein uS11">
    <location>
        <begin position="1"/>
        <end position="129"/>
    </location>
</feature>
<protein>
    <recommendedName>
        <fullName evidence="1">Small ribosomal subunit protein uS11</fullName>
    </recommendedName>
    <alternativeName>
        <fullName evidence="2">30S ribosomal protein S11</fullName>
    </alternativeName>
</protein>
<accession>Q6G2Y8</accession>
<comment type="function">
    <text evidence="1">Located on the platform of the 30S subunit, it bridges several disparate RNA helices of the 16S rRNA. Forms part of the Shine-Dalgarno cleft in the 70S ribosome.</text>
</comment>
<comment type="subunit">
    <text evidence="1">Part of the 30S ribosomal subunit. Interacts with proteins S7 and S18. Binds to IF-3.</text>
</comment>
<comment type="similarity">
    <text evidence="1">Belongs to the universal ribosomal protein uS11 family.</text>
</comment>
<sequence>MAKEATRVRRRERKNISSGVVHINSTFNNTMITITDAQGNAIAWSSAGAQGFKGSRKSTPFAAQVAAEDCARKAQEHGMRSLEVEVCGPGSGRESALRALQSVGFIITSIRDVTPIPHNGCRPRKRRRV</sequence>
<reference key="1">
    <citation type="journal article" date="2004" name="Proc. Natl. Acad. Sci. U.S.A.">
        <title>The louse-borne human pathogen Bartonella quintana is a genomic derivative of the zoonotic agent Bartonella henselae.</title>
        <authorList>
            <person name="Alsmark U.C.M."/>
            <person name="Frank A.C."/>
            <person name="Karlberg E.O."/>
            <person name="Legault B.-A."/>
            <person name="Ardell D.H."/>
            <person name="Canbaeck B."/>
            <person name="Eriksson A.-S."/>
            <person name="Naeslund A.K."/>
            <person name="Handley S.A."/>
            <person name="Huvet M."/>
            <person name="La Scola B."/>
            <person name="Holmberg M."/>
            <person name="Andersson S.G.E."/>
        </authorList>
    </citation>
    <scope>NUCLEOTIDE SEQUENCE [LARGE SCALE GENOMIC DNA]</scope>
    <source>
        <strain>ATCC 49882 / DSM 28221 / CCUG 30454 / Houston 1</strain>
    </source>
</reference>
<name>RS11_BARHE</name>
<proteinExistence type="inferred from homology"/>
<dbReference type="EMBL" id="BX897699">
    <property type="protein sequence ID" value="CAF27819.1"/>
    <property type="molecule type" value="Genomic_DNA"/>
</dbReference>
<dbReference type="RefSeq" id="WP_011180892.1">
    <property type="nucleotide sequence ID" value="NZ_LRIJ02000001.1"/>
</dbReference>
<dbReference type="SMR" id="Q6G2Y8"/>
<dbReference type="PaxDb" id="283166-BH10280"/>
<dbReference type="EnsemblBacteria" id="CAF27819">
    <property type="protein sequence ID" value="CAF27819"/>
    <property type="gene ID" value="BH10280"/>
</dbReference>
<dbReference type="GeneID" id="92985286"/>
<dbReference type="KEGG" id="bhe:BH10280"/>
<dbReference type="eggNOG" id="COG0100">
    <property type="taxonomic scope" value="Bacteria"/>
</dbReference>
<dbReference type="OrthoDB" id="9806415at2"/>
<dbReference type="Proteomes" id="UP000000421">
    <property type="component" value="Chromosome"/>
</dbReference>
<dbReference type="GO" id="GO:1990904">
    <property type="term" value="C:ribonucleoprotein complex"/>
    <property type="evidence" value="ECO:0007669"/>
    <property type="project" value="UniProtKB-KW"/>
</dbReference>
<dbReference type="GO" id="GO:0005840">
    <property type="term" value="C:ribosome"/>
    <property type="evidence" value="ECO:0007669"/>
    <property type="project" value="UniProtKB-KW"/>
</dbReference>
<dbReference type="GO" id="GO:0019843">
    <property type="term" value="F:rRNA binding"/>
    <property type="evidence" value="ECO:0007669"/>
    <property type="project" value="UniProtKB-UniRule"/>
</dbReference>
<dbReference type="GO" id="GO:0003735">
    <property type="term" value="F:structural constituent of ribosome"/>
    <property type="evidence" value="ECO:0007669"/>
    <property type="project" value="InterPro"/>
</dbReference>
<dbReference type="GO" id="GO:0006412">
    <property type="term" value="P:translation"/>
    <property type="evidence" value="ECO:0007669"/>
    <property type="project" value="UniProtKB-UniRule"/>
</dbReference>
<dbReference type="FunFam" id="3.30.420.80:FF:000001">
    <property type="entry name" value="30S ribosomal protein S11"/>
    <property type="match status" value="1"/>
</dbReference>
<dbReference type="Gene3D" id="3.30.420.80">
    <property type="entry name" value="Ribosomal protein S11"/>
    <property type="match status" value="1"/>
</dbReference>
<dbReference type="HAMAP" id="MF_01310">
    <property type="entry name" value="Ribosomal_uS11"/>
    <property type="match status" value="1"/>
</dbReference>
<dbReference type="InterPro" id="IPR001971">
    <property type="entry name" value="Ribosomal_uS11"/>
</dbReference>
<dbReference type="InterPro" id="IPR019981">
    <property type="entry name" value="Ribosomal_uS11_bac-type"/>
</dbReference>
<dbReference type="InterPro" id="IPR018102">
    <property type="entry name" value="Ribosomal_uS11_CS"/>
</dbReference>
<dbReference type="InterPro" id="IPR036967">
    <property type="entry name" value="Ribosomal_uS11_sf"/>
</dbReference>
<dbReference type="NCBIfam" id="NF003698">
    <property type="entry name" value="PRK05309.1"/>
    <property type="match status" value="1"/>
</dbReference>
<dbReference type="NCBIfam" id="TIGR03632">
    <property type="entry name" value="uS11_bact"/>
    <property type="match status" value="1"/>
</dbReference>
<dbReference type="PANTHER" id="PTHR11759">
    <property type="entry name" value="40S RIBOSOMAL PROTEIN S14/30S RIBOSOMAL PROTEIN S11"/>
    <property type="match status" value="1"/>
</dbReference>
<dbReference type="Pfam" id="PF00411">
    <property type="entry name" value="Ribosomal_S11"/>
    <property type="match status" value="1"/>
</dbReference>
<dbReference type="PIRSF" id="PIRSF002131">
    <property type="entry name" value="Ribosomal_S11"/>
    <property type="match status" value="1"/>
</dbReference>
<dbReference type="SUPFAM" id="SSF53137">
    <property type="entry name" value="Translational machinery components"/>
    <property type="match status" value="1"/>
</dbReference>
<dbReference type="PROSITE" id="PS00054">
    <property type="entry name" value="RIBOSOMAL_S11"/>
    <property type="match status" value="1"/>
</dbReference>
<evidence type="ECO:0000255" key="1">
    <source>
        <dbReference type="HAMAP-Rule" id="MF_01310"/>
    </source>
</evidence>
<evidence type="ECO:0000305" key="2"/>
<keyword id="KW-0687">Ribonucleoprotein</keyword>
<keyword id="KW-0689">Ribosomal protein</keyword>
<keyword id="KW-0694">RNA-binding</keyword>
<keyword id="KW-0699">rRNA-binding</keyword>